<name>RS9_XYLF2</name>
<keyword id="KW-0687">Ribonucleoprotein</keyword>
<keyword id="KW-0689">Ribosomal protein</keyword>
<organism>
    <name type="scientific">Xylella fastidiosa (strain M23)</name>
    <dbReference type="NCBI Taxonomy" id="405441"/>
    <lineage>
        <taxon>Bacteria</taxon>
        <taxon>Pseudomonadati</taxon>
        <taxon>Pseudomonadota</taxon>
        <taxon>Gammaproteobacteria</taxon>
        <taxon>Lysobacterales</taxon>
        <taxon>Lysobacteraceae</taxon>
        <taxon>Xylella</taxon>
    </lineage>
</organism>
<proteinExistence type="inferred from homology"/>
<comment type="similarity">
    <text evidence="1">Belongs to the universal ribosomal protein uS9 family.</text>
</comment>
<dbReference type="EMBL" id="CP001011">
    <property type="protein sequence ID" value="ACB92227.1"/>
    <property type="molecule type" value="Genomic_DNA"/>
</dbReference>
<dbReference type="RefSeq" id="WP_004087865.1">
    <property type="nucleotide sequence ID" value="NC_010577.1"/>
</dbReference>
<dbReference type="SMR" id="B2IAE7"/>
<dbReference type="GeneID" id="93904530"/>
<dbReference type="KEGG" id="xfn:XfasM23_0788"/>
<dbReference type="HOGENOM" id="CLU_046483_2_1_6"/>
<dbReference type="Proteomes" id="UP000001698">
    <property type="component" value="Chromosome"/>
</dbReference>
<dbReference type="GO" id="GO:0022627">
    <property type="term" value="C:cytosolic small ribosomal subunit"/>
    <property type="evidence" value="ECO:0007669"/>
    <property type="project" value="TreeGrafter"/>
</dbReference>
<dbReference type="GO" id="GO:0003723">
    <property type="term" value="F:RNA binding"/>
    <property type="evidence" value="ECO:0007669"/>
    <property type="project" value="TreeGrafter"/>
</dbReference>
<dbReference type="GO" id="GO:0003735">
    <property type="term" value="F:structural constituent of ribosome"/>
    <property type="evidence" value="ECO:0007669"/>
    <property type="project" value="InterPro"/>
</dbReference>
<dbReference type="GO" id="GO:0006412">
    <property type="term" value="P:translation"/>
    <property type="evidence" value="ECO:0007669"/>
    <property type="project" value="UniProtKB-UniRule"/>
</dbReference>
<dbReference type="FunFam" id="3.30.230.10:FF:000001">
    <property type="entry name" value="30S ribosomal protein S9"/>
    <property type="match status" value="1"/>
</dbReference>
<dbReference type="Gene3D" id="3.30.230.10">
    <property type="match status" value="1"/>
</dbReference>
<dbReference type="HAMAP" id="MF_00532_B">
    <property type="entry name" value="Ribosomal_uS9_B"/>
    <property type="match status" value="1"/>
</dbReference>
<dbReference type="InterPro" id="IPR020568">
    <property type="entry name" value="Ribosomal_Su5_D2-typ_SF"/>
</dbReference>
<dbReference type="InterPro" id="IPR000754">
    <property type="entry name" value="Ribosomal_uS9"/>
</dbReference>
<dbReference type="InterPro" id="IPR023035">
    <property type="entry name" value="Ribosomal_uS9_bac/plastid"/>
</dbReference>
<dbReference type="InterPro" id="IPR020574">
    <property type="entry name" value="Ribosomal_uS9_CS"/>
</dbReference>
<dbReference type="InterPro" id="IPR014721">
    <property type="entry name" value="Ribsml_uS5_D2-typ_fold_subgr"/>
</dbReference>
<dbReference type="NCBIfam" id="NF001099">
    <property type="entry name" value="PRK00132.1"/>
    <property type="match status" value="1"/>
</dbReference>
<dbReference type="PANTHER" id="PTHR21569">
    <property type="entry name" value="RIBOSOMAL PROTEIN S9"/>
    <property type="match status" value="1"/>
</dbReference>
<dbReference type="PANTHER" id="PTHR21569:SF1">
    <property type="entry name" value="SMALL RIBOSOMAL SUBUNIT PROTEIN US9M"/>
    <property type="match status" value="1"/>
</dbReference>
<dbReference type="Pfam" id="PF00380">
    <property type="entry name" value="Ribosomal_S9"/>
    <property type="match status" value="1"/>
</dbReference>
<dbReference type="SUPFAM" id="SSF54211">
    <property type="entry name" value="Ribosomal protein S5 domain 2-like"/>
    <property type="match status" value="1"/>
</dbReference>
<dbReference type="PROSITE" id="PS00360">
    <property type="entry name" value="RIBOSOMAL_S9"/>
    <property type="match status" value="1"/>
</dbReference>
<gene>
    <name evidence="1" type="primary">rpsI</name>
    <name type="ordered locus">XfasM23_0788</name>
</gene>
<protein>
    <recommendedName>
        <fullName evidence="1">Small ribosomal subunit protein uS9</fullName>
    </recommendedName>
    <alternativeName>
        <fullName evidence="3">30S ribosomal protein S9</fullName>
    </alternativeName>
</protein>
<sequence>MPITQNYGTGRRKSSTARVFLRKGSGNISVNGRPLDEFFGRETARMIVRQPLELTKNVSNFDILITATGGGTTGQAGAIRLGIARALVEYDTSLKPELRKAGFMTRDPREVERKKVGLHKARRATQFSKR</sequence>
<accession>B2IAE7</accession>
<feature type="chain" id="PRO_1000128198" description="Small ribosomal subunit protein uS9">
    <location>
        <begin position="1"/>
        <end position="130"/>
    </location>
</feature>
<feature type="region of interest" description="Disordered" evidence="2">
    <location>
        <begin position="111"/>
        <end position="130"/>
    </location>
</feature>
<feature type="compositionally biased region" description="Basic residues" evidence="2">
    <location>
        <begin position="116"/>
        <end position="130"/>
    </location>
</feature>
<evidence type="ECO:0000255" key="1">
    <source>
        <dbReference type="HAMAP-Rule" id="MF_00532"/>
    </source>
</evidence>
<evidence type="ECO:0000256" key="2">
    <source>
        <dbReference type="SAM" id="MobiDB-lite"/>
    </source>
</evidence>
<evidence type="ECO:0000305" key="3"/>
<reference key="1">
    <citation type="journal article" date="2010" name="J. Bacteriol.">
        <title>Whole genome sequences of two Xylella fastidiosa strains (M12 and M23) causing almond leaf scorch disease in California.</title>
        <authorList>
            <person name="Chen J."/>
            <person name="Xie G."/>
            <person name="Han S."/>
            <person name="Chertkov O."/>
            <person name="Sims D."/>
            <person name="Civerolo E.L."/>
        </authorList>
    </citation>
    <scope>NUCLEOTIDE SEQUENCE [LARGE SCALE GENOMIC DNA]</scope>
    <source>
        <strain>M23</strain>
    </source>
</reference>